<accession>P96343</accession>
<reference key="1">
    <citation type="journal article" date="1995" name="Science">
        <title>Whole-genome random sequencing and assembly of Haemophilus influenzae Rd.</title>
        <authorList>
            <person name="Fleischmann R.D."/>
            <person name="Adams M.D."/>
            <person name="White O."/>
            <person name="Clayton R.A."/>
            <person name="Kirkness E.F."/>
            <person name="Kerlavage A.R."/>
            <person name="Bult C.J."/>
            <person name="Tomb J.-F."/>
            <person name="Dougherty B.A."/>
            <person name="Merrick J.M."/>
            <person name="McKenney K."/>
            <person name="Sutton G.G."/>
            <person name="FitzHugh W."/>
            <person name="Fields C.A."/>
            <person name="Gocayne J.D."/>
            <person name="Scott J.D."/>
            <person name="Shirley R."/>
            <person name="Liu L.-I."/>
            <person name="Glodek A."/>
            <person name="Kelley J.M."/>
            <person name="Weidman J.F."/>
            <person name="Phillips C.A."/>
            <person name="Spriggs T."/>
            <person name="Hedblom E."/>
            <person name="Cotton M.D."/>
            <person name="Utterback T.R."/>
            <person name="Hanna M.C."/>
            <person name="Nguyen D.T."/>
            <person name="Saudek D.M."/>
            <person name="Brandon R.C."/>
            <person name="Fine L.D."/>
            <person name="Fritchman J.L."/>
            <person name="Fuhrmann J.L."/>
            <person name="Geoghagen N.S.M."/>
            <person name="Gnehm C.L."/>
            <person name="McDonald L.A."/>
            <person name="Small K.V."/>
            <person name="Fraser C.M."/>
            <person name="Smith H.O."/>
            <person name="Venter J.C."/>
        </authorList>
    </citation>
    <scope>NUCLEOTIDE SEQUENCE [LARGE SCALE GENOMIC DNA]</scope>
    <source>
        <strain>ATCC 51907 / DSM 11121 / KW20 / Rd</strain>
    </source>
</reference>
<evidence type="ECO:0000250" key="1"/>
<evidence type="ECO:0000255" key="2"/>
<evidence type="ECO:0000255" key="3">
    <source>
        <dbReference type="PROSITE-ProRule" id="PRU00257"/>
    </source>
</evidence>
<dbReference type="EMBL" id="L42023">
    <property type="protein sequence ID" value="AAC23126.1"/>
    <property type="molecule type" value="Genomic_DNA"/>
</dbReference>
<dbReference type="PIR" id="C64126">
    <property type="entry name" value="C64126"/>
</dbReference>
<dbReference type="RefSeq" id="NP_439632.1">
    <property type="nucleotide sequence ID" value="NC_000907.1"/>
</dbReference>
<dbReference type="SMR" id="P96343"/>
<dbReference type="STRING" id="71421.HI_1481"/>
<dbReference type="EnsemblBacteria" id="AAC23126">
    <property type="protein sequence ID" value="AAC23126"/>
    <property type="gene ID" value="HI_1481"/>
</dbReference>
<dbReference type="KEGG" id="hin:HI_1481"/>
<dbReference type="PATRIC" id="fig|71421.8.peg.1548"/>
<dbReference type="eggNOG" id="COG2842">
    <property type="taxonomic scope" value="Bacteria"/>
</dbReference>
<dbReference type="HOGENOM" id="CLU_056183_1_0_6"/>
<dbReference type="OrthoDB" id="8456465at2"/>
<dbReference type="PhylomeDB" id="P96343"/>
<dbReference type="BioCyc" id="HINF71421:G1GJ1-1506-MONOMER"/>
<dbReference type="Proteomes" id="UP000000579">
    <property type="component" value="Chromosome"/>
</dbReference>
<dbReference type="GO" id="GO:0005524">
    <property type="term" value="F:ATP binding"/>
    <property type="evidence" value="ECO:0007669"/>
    <property type="project" value="UniProtKB-KW"/>
</dbReference>
<dbReference type="GO" id="GO:0016887">
    <property type="term" value="F:ATP hydrolysis activity"/>
    <property type="evidence" value="ECO:0007669"/>
    <property type="project" value="InterPro"/>
</dbReference>
<dbReference type="GO" id="GO:0003677">
    <property type="term" value="F:DNA binding"/>
    <property type="evidence" value="ECO:0007669"/>
    <property type="project" value="UniProtKB-KW"/>
</dbReference>
<dbReference type="GO" id="GO:0015074">
    <property type="term" value="P:DNA integration"/>
    <property type="evidence" value="ECO:0007669"/>
    <property type="project" value="UniProtKB-KW"/>
</dbReference>
<dbReference type="GO" id="GO:0006260">
    <property type="term" value="P:DNA replication"/>
    <property type="evidence" value="ECO:0007669"/>
    <property type="project" value="UniProtKB-KW"/>
</dbReference>
<dbReference type="GO" id="GO:0006313">
    <property type="term" value="P:DNA transposition"/>
    <property type="evidence" value="ECO:0007669"/>
    <property type="project" value="InterPro"/>
</dbReference>
<dbReference type="CDD" id="cd00093">
    <property type="entry name" value="HTH_XRE"/>
    <property type="match status" value="1"/>
</dbReference>
<dbReference type="CDD" id="cd00882">
    <property type="entry name" value="Ras_like_GTPase"/>
    <property type="match status" value="1"/>
</dbReference>
<dbReference type="Gene3D" id="1.10.1180.10">
    <property type="entry name" value="B transposition protein, C-terminal domain"/>
    <property type="match status" value="1"/>
</dbReference>
<dbReference type="Gene3D" id="1.10.260.40">
    <property type="entry name" value="lambda repressor-like DNA-binding domains"/>
    <property type="match status" value="1"/>
</dbReference>
<dbReference type="Gene3D" id="3.40.50.300">
    <property type="entry name" value="P-loop containing nucleotide triphosphate hydrolases"/>
    <property type="match status" value="1"/>
</dbReference>
<dbReference type="InterPro" id="IPR049945">
    <property type="entry name" value="AAA_22"/>
</dbReference>
<dbReference type="InterPro" id="IPR036733">
    <property type="entry name" value="B_transposit_C_sf"/>
</dbReference>
<dbReference type="InterPro" id="IPR009084">
    <property type="entry name" value="B_transpositn_C"/>
</dbReference>
<dbReference type="InterPro" id="IPR001387">
    <property type="entry name" value="Cro/C1-type_HTH"/>
</dbReference>
<dbReference type="InterPro" id="IPR052026">
    <property type="entry name" value="ExeA_AAA_ATPase_DNA-bind"/>
</dbReference>
<dbReference type="InterPro" id="IPR010982">
    <property type="entry name" value="Lambda_DNA-bd_dom_sf"/>
</dbReference>
<dbReference type="InterPro" id="IPR027417">
    <property type="entry name" value="P-loop_NTPase"/>
</dbReference>
<dbReference type="PANTHER" id="PTHR35894">
    <property type="entry name" value="GENERAL SECRETION PATHWAY PROTEIN A-RELATED"/>
    <property type="match status" value="1"/>
</dbReference>
<dbReference type="PANTHER" id="PTHR35894:SF5">
    <property type="entry name" value="MU-LIKE PROPHAGE FLUMU DNA TRANSPOSITION PROTEIN B"/>
    <property type="match status" value="1"/>
</dbReference>
<dbReference type="Pfam" id="PF13401">
    <property type="entry name" value="AAA_22"/>
    <property type="match status" value="1"/>
</dbReference>
<dbReference type="Pfam" id="PF09077">
    <property type="entry name" value="Phage-MuB_C"/>
    <property type="match status" value="1"/>
</dbReference>
<dbReference type="SMART" id="SM00530">
    <property type="entry name" value="HTH_XRE"/>
    <property type="match status" value="1"/>
</dbReference>
<dbReference type="SUPFAM" id="SSF47681">
    <property type="entry name" value="C-terminal domain of B transposition protein"/>
    <property type="match status" value="1"/>
</dbReference>
<dbReference type="SUPFAM" id="SSF47413">
    <property type="entry name" value="lambda repressor-like DNA-binding domains"/>
    <property type="match status" value="1"/>
</dbReference>
<dbReference type="SUPFAM" id="SSF52540">
    <property type="entry name" value="P-loop containing nucleoside triphosphate hydrolases"/>
    <property type="match status" value="1"/>
</dbReference>
<dbReference type="PROSITE" id="PS50943">
    <property type="entry name" value="HTH_CROC1"/>
    <property type="match status" value="1"/>
</dbReference>
<gene>
    <name type="ordered locus">HI_1481</name>
</gene>
<feature type="chain" id="PRO_0000149719" description="Mu-like prophage FluMu DNA transposition protein B">
    <location>
        <begin position="1"/>
        <end position="287"/>
    </location>
</feature>
<feature type="domain" description="HTH cro/C1-type" evidence="3">
    <location>
        <begin position="7"/>
        <end position="62"/>
    </location>
</feature>
<feature type="DNA-binding region" description="H-T-H motif" evidence="3">
    <location>
        <begin position="18"/>
        <end position="37"/>
    </location>
</feature>
<feature type="binding site" evidence="2">
    <location>
        <begin position="98"/>
        <end position="105"/>
    </location>
    <ligand>
        <name>ATP</name>
        <dbReference type="ChEBI" id="CHEBI:30616"/>
    </ligand>
</feature>
<name>VPB_HAEIN</name>
<proteinExistence type="inferred from homology"/>
<keyword id="KW-0067">ATP-binding</keyword>
<keyword id="KW-0229">DNA integration</keyword>
<keyword id="KW-0235">DNA replication</keyword>
<keyword id="KW-0238">DNA-binding</keyword>
<keyword id="KW-0547">Nucleotide-binding</keyword>
<keyword id="KW-1185">Reference proteome</keyword>
<keyword id="KW-0815">Transposition</keyword>
<protein>
    <recommendedName>
        <fullName>Mu-like prophage FluMu DNA transposition protein B</fullName>
    </recommendedName>
</protein>
<sequence>MTLINKLKQHLSDSQITQAQLAREAGVNAGALSAYLNDNYKGNIADVEAKLAAYLEKKAVQAREFVEAPAFIETATSRQIFKTLEFAQIANCLATVYGMSGVGKTKAIQEFAKSHANVWLVTASPSRSSLSEILYEIALELGISDAPRRKGTLSRLIARKIKGTEGLLIVDEADHLPYEALEELRIMQEEAGIGLVLVGNDKVYTRMKGGISPSHEYARLWSRVAKNTSIQKTKKADTQAVAQAWGLETDEEALKVMQSITETGGGLRILTQTYACRNGSKRIWQVD</sequence>
<organism>
    <name type="scientific">Haemophilus influenzae (strain ATCC 51907 / DSM 11121 / KW20 / Rd)</name>
    <dbReference type="NCBI Taxonomy" id="71421"/>
    <lineage>
        <taxon>Bacteria</taxon>
        <taxon>Pseudomonadati</taxon>
        <taxon>Pseudomonadota</taxon>
        <taxon>Gammaproteobacteria</taxon>
        <taxon>Pasteurellales</taxon>
        <taxon>Pasteurellaceae</taxon>
        <taxon>Haemophilus</taxon>
    </lineage>
</organism>
<comment type="function">
    <text evidence="1">This protein is a non-specific DNA-binding and ATP-hydrolyzing protein essential for bacteriophage integration and replication.</text>
</comment>